<organism>
    <name type="scientific">Crotalus atrox</name>
    <name type="common">Western diamondback rattlesnake</name>
    <dbReference type="NCBI Taxonomy" id="8730"/>
    <lineage>
        <taxon>Eukaryota</taxon>
        <taxon>Metazoa</taxon>
        <taxon>Chordata</taxon>
        <taxon>Craniata</taxon>
        <taxon>Vertebrata</taxon>
        <taxon>Euteleostomi</taxon>
        <taxon>Lepidosauria</taxon>
        <taxon>Squamata</taxon>
        <taxon>Bifurcata</taxon>
        <taxon>Unidentata</taxon>
        <taxon>Episquamata</taxon>
        <taxon>Toxicofera</taxon>
        <taxon>Serpentes</taxon>
        <taxon>Colubroidea</taxon>
        <taxon>Viperidae</taxon>
        <taxon>Crotalinae</taxon>
        <taxon>Crotalus</taxon>
    </lineage>
</organism>
<proteinExistence type="evidence at protein level"/>
<reference key="1">
    <citation type="journal article" date="1989" name="Thromb. Res.">
        <title>Catroxobin, a weakly thrombin-like enzyme from the venom of Crotalus atrox. NH2-terminal and active site amino acid sequences.</title>
        <authorList>
            <person name="Pirkle H."/>
            <person name="Theodor I."/>
            <person name="Lopez R."/>
        </authorList>
    </citation>
    <scope>PROTEIN SEQUENCE</scope>
    <scope>FUNCTION</scope>
    <scope>SUBCELLULAR LOCATION</scope>
    <scope>TISSUE SPECIFICITY</scope>
</reference>
<reference key="2">
    <citation type="journal article" date="2009" name="J. Proteome Res.">
        <title>Exploring the venom proteome of the western diamondback rattlesnake, Crotalus atrox, via snake venomics and combinatorial peptide ligand library approaches.</title>
        <authorList>
            <person name="Calvete J.J."/>
            <person name="Fasoli E."/>
            <person name="Sanz L."/>
            <person name="Boschetti E."/>
            <person name="Righetti P.G."/>
        </authorList>
    </citation>
    <scope>PROTEIN SEQUENCE OF 1-23</scope>
    <scope>IDENTIFICATION BY MASS SPECTROMETRY</scope>
    <source>
        <tissue>Venom</tissue>
    </source>
</reference>
<accession>Q7LZF5</accession>
<dbReference type="EC" id="3.4.21.-"/>
<dbReference type="PIR" id="A37002">
    <property type="entry name" value="A37002"/>
</dbReference>
<dbReference type="SMR" id="Q7LZF5"/>
<dbReference type="GO" id="GO:0005576">
    <property type="term" value="C:extracellular region"/>
    <property type="evidence" value="ECO:0007669"/>
    <property type="project" value="UniProtKB-SubCell"/>
</dbReference>
<dbReference type="GO" id="GO:0030141">
    <property type="term" value="C:secretory granule"/>
    <property type="evidence" value="ECO:0007669"/>
    <property type="project" value="TreeGrafter"/>
</dbReference>
<dbReference type="GO" id="GO:0004252">
    <property type="term" value="F:serine-type endopeptidase activity"/>
    <property type="evidence" value="ECO:0007669"/>
    <property type="project" value="InterPro"/>
</dbReference>
<dbReference type="GO" id="GO:0090729">
    <property type="term" value="F:toxin activity"/>
    <property type="evidence" value="ECO:0007669"/>
    <property type="project" value="UniProtKB-KW"/>
</dbReference>
<dbReference type="GO" id="GO:0006508">
    <property type="term" value="P:proteolysis"/>
    <property type="evidence" value="ECO:0007669"/>
    <property type="project" value="UniProtKB-KW"/>
</dbReference>
<dbReference type="Gene3D" id="2.40.10.10">
    <property type="entry name" value="Trypsin-like serine proteases"/>
    <property type="match status" value="2"/>
</dbReference>
<dbReference type="InterPro" id="IPR009003">
    <property type="entry name" value="Peptidase_S1_PA"/>
</dbReference>
<dbReference type="InterPro" id="IPR043504">
    <property type="entry name" value="Peptidase_S1_PA_chymotrypsin"/>
</dbReference>
<dbReference type="InterPro" id="IPR001254">
    <property type="entry name" value="Trypsin_dom"/>
</dbReference>
<dbReference type="InterPro" id="IPR018114">
    <property type="entry name" value="TRYPSIN_HIS"/>
</dbReference>
<dbReference type="InterPro" id="IPR033116">
    <property type="entry name" value="TRYPSIN_SER"/>
</dbReference>
<dbReference type="PANTHER" id="PTHR24271:SF47">
    <property type="entry name" value="KALLIKREIN-1"/>
    <property type="match status" value="1"/>
</dbReference>
<dbReference type="PANTHER" id="PTHR24271">
    <property type="entry name" value="KALLIKREIN-RELATED"/>
    <property type="match status" value="1"/>
</dbReference>
<dbReference type="Pfam" id="PF00089">
    <property type="entry name" value="Trypsin"/>
    <property type="match status" value="2"/>
</dbReference>
<dbReference type="SUPFAM" id="SSF50494">
    <property type="entry name" value="Trypsin-like serine proteases"/>
    <property type="match status" value="2"/>
</dbReference>
<dbReference type="PROSITE" id="PS00134">
    <property type="entry name" value="TRYPSIN_HIS"/>
    <property type="match status" value="1"/>
</dbReference>
<dbReference type="PROSITE" id="PS00135">
    <property type="entry name" value="TRYPSIN_SER"/>
    <property type="match status" value="1"/>
</dbReference>
<sequence length="75" mass="7593">VVGGDECNINEHRSLVAIFVSTEFDCGGDLINVEWVLTAAHCTLCAGIPEGGLDTCGGDSGGPLICDGKPDGITS</sequence>
<evidence type="ECO:0000250" key="1"/>
<evidence type="ECO:0000255" key="2">
    <source>
        <dbReference type="PROSITE-ProRule" id="PRU00274"/>
    </source>
</evidence>
<evidence type="ECO:0000269" key="3">
    <source>
    </source>
</evidence>
<evidence type="ECO:0000305" key="4"/>
<keyword id="KW-1204">Blood coagulation cascade activating toxin</keyword>
<keyword id="KW-0903">Direct protein sequencing</keyword>
<keyword id="KW-1015">Disulfide bond</keyword>
<keyword id="KW-1199">Hemostasis impairing toxin</keyword>
<keyword id="KW-0378">Hydrolase</keyword>
<keyword id="KW-0645">Protease</keyword>
<keyword id="KW-0964">Secreted</keyword>
<keyword id="KW-0720">Serine protease</keyword>
<keyword id="KW-0800">Toxin</keyword>
<comment type="function">
    <text evidence="3">Thrombin-like snake venom serine protease. Clots fibrinogen (FGA and FGB) very slowly, releasing fibrinopeptide A and a small amount of fibrinopeptide B.</text>
</comment>
<comment type="subunit">
    <text evidence="1">Monomer.</text>
</comment>
<comment type="subcellular location">
    <subcellularLocation>
        <location evidence="3">Secreted</location>
    </subcellularLocation>
</comment>
<comment type="tissue specificity">
    <text evidence="3">Expressed by the venom gland.</text>
</comment>
<comment type="similarity">
    <text evidence="2">Belongs to the peptidase S1 family. Snake venom subfamily.</text>
</comment>
<feature type="chain" id="PRO_0000296306" description="Thrombin-like enzyme catroxobin-1">
    <location>
        <begin position="1"/>
        <end position="75" status="greater than"/>
    </location>
</feature>
<feature type="domain" description="Peptidase S1" evidence="2">
    <location>
        <begin position="1"/>
        <end position="75"/>
    </location>
</feature>
<feature type="active site" description="Charge relay system" evidence="1">
    <location>
        <position position="41"/>
    </location>
</feature>
<feature type="active site" description="Charge relay system" evidence="1">
    <location>
        <position position="60"/>
    </location>
</feature>
<feature type="disulfide bond" evidence="2">
    <location>
        <begin position="26"/>
        <end position="42"/>
    </location>
</feature>
<feature type="non-consecutive residues" evidence="4">
    <location>
        <begin position="42"/>
        <end position="43"/>
    </location>
</feature>
<feature type="non-terminal residue">
    <location>
        <position position="75"/>
    </location>
</feature>
<name>VSPC1_CROAT</name>
<protein>
    <recommendedName>
        <fullName>Thrombin-like enzyme catroxobin-1</fullName>
        <shortName>SVTLE</shortName>
        <ecNumber>3.4.21.-</ecNumber>
    </recommendedName>
    <alternativeName>
        <fullName>Catroxobin I</fullName>
    </alternativeName>
    <alternativeName>
        <fullName>Fibrinogen-clotting enzyme</fullName>
    </alternativeName>
    <alternativeName>
        <fullName>Snake venom serine protease</fullName>
        <shortName>SVSP</shortName>
    </alternativeName>
</protein>